<evidence type="ECO:0000250" key="1">
    <source>
        <dbReference type="UniProtKB" id="P02893"/>
    </source>
</evidence>
<evidence type="ECO:0000250" key="2">
    <source>
        <dbReference type="UniProtKB" id="P19597"/>
    </source>
</evidence>
<evidence type="ECO:0000250" key="3">
    <source>
        <dbReference type="UniProtKB" id="P23093"/>
    </source>
</evidence>
<evidence type="ECO:0000250" key="4">
    <source>
        <dbReference type="UniProtKB" id="Q7K740"/>
    </source>
</evidence>
<evidence type="ECO:0000255" key="5"/>
<evidence type="ECO:0000255" key="6">
    <source>
        <dbReference type="PROSITE-ProRule" id="PRU00210"/>
    </source>
</evidence>
<evidence type="ECO:0000256" key="7">
    <source>
        <dbReference type="SAM" id="MobiDB-lite"/>
    </source>
</evidence>
<evidence type="ECO:0000269" key="8">
    <source>
    </source>
</evidence>
<evidence type="ECO:0000303" key="9">
    <source>
    </source>
</evidence>
<evidence type="ECO:0000305" key="10"/>
<evidence type="ECO:0000305" key="11">
    <source>
    </source>
</evidence>
<evidence type="ECO:0007829" key="12">
    <source>
        <dbReference type="PDB" id="7RLZ"/>
    </source>
</evidence>
<accession>P08677</accession>
<keyword id="KW-0002">3D-structure</keyword>
<keyword id="KW-1003">Cell membrane</keyword>
<keyword id="KW-0963">Cytoplasm</keyword>
<keyword id="KW-1015">Disulfide bond</keyword>
<keyword id="KW-0325">Glycoprotein</keyword>
<keyword id="KW-0336">GPI-anchor</keyword>
<keyword id="KW-0449">Lipoprotein</keyword>
<keyword id="KW-0461">Malaria</keyword>
<keyword id="KW-0472">Membrane</keyword>
<keyword id="KW-0677">Repeat</keyword>
<keyword id="KW-0732">Signal</keyword>
<keyword id="KW-0748">Sporozoite</keyword>
<name>CSP_PLAVB</name>
<organism>
    <name type="scientific">Plasmodium vivax (strain Belem)</name>
    <dbReference type="NCBI Taxonomy" id="31273"/>
    <lineage>
        <taxon>Eukaryota</taxon>
        <taxon>Sar</taxon>
        <taxon>Alveolata</taxon>
        <taxon>Apicomplexa</taxon>
        <taxon>Aconoidasida</taxon>
        <taxon>Haemosporida</taxon>
        <taxon>Plasmodiidae</taxon>
        <taxon>Plasmodium</taxon>
        <taxon>Plasmodium (Plasmodium)</taxon>
    </lineage>
</organism>
<proteinExistence type="evidence at protein level"/>
<reference key="1">
    <citation type="journal article" date="1985" name="Science">
        <title>Circumsporozoite protein of Plasmodium vivax: gene cloning and characterization of the immunodominant epitope.</title>
        <authorList>
            <person name="Arnot D.E."/>
            <person name="Barnwell J.W."/>
            <person name="Tam J.P."/>
            <person name="Nussenzweig V."/>
            <person name="Nussenzweig R.S."/>
            <person name="Enea V."/>
        </authorList>
    </citation>
    <scope>NUCLEOTIDE SEQUENCE [GENOMIC DNA]</scope>
    <scope>POLYMORPHISM</scope>
    <scope>REPEATS</scope>
</reference>
<reference key="2">
    <citation type="journal article" date="1988" name="Proc. Natl. Acad. Sci. U.S.A.">
        <title>Does biased gene conversion influence polymorphism in the circumsporozoite protein-encoding gene of Plasmodium vivax?</title>
        <authorList>
            <person name="Arnot D.E."/>
            <person name="Barnwell J.W."/>
            <person name="Stewart M.J."/>
        </authorList>
    </citation>
    <scope>SEQUENCE REVISION</scope>
</reference>
<feature type="signal peptide" evidence="5">
    <location>
        <begin position="1"/>
        <end position="22"/>
    </location>
</feature>
<feature type="chain" id="PRO_0000024535" description="Circumsporozoite protein" evidence="5">
    <location>
        <begin position="23"/>
        <end position="355"/>
    </location>
</feature>
<feature type="chain" id="PRO_0000455505" description="Circumsporozoite protein C-terminus" evidence="3">
    <location>
        <begin status="unknown"/>
        <end position="355"/>
    </location>
</feature>
<feature type="propeptide" id="PRO_0000455506" description="Removed in mature form" evidence="5">
    <location>
        <begin position="356"/>
        <end position="378"/>
    </location>
</feature>
<feature type="repeat" description="1" evidence="11">
    <location>
        <begin position="95"/>
        <end position="103"/>
    </location>
</feature>
<feature type="repeat" description="2" evidence="11">
    <location>
        <begin position="104"/>
        <end position="112"/>
    </location>
</feature>
<feature type="repeat" description="3" evidence="11">
    <location>
        <begin position="113"/>
        <end position="121"/>
    </location>
</feature>
<feature type="repeat" description="4" evidence="11">
    <location>
        <begin position="122"/>
        <end position="130"/>
    </location>
</feature>
<feature type="repeat" description="5" evidence="11">
    <location>
        <begin position="131"/>
        <end position="139"/>
    </location>
</feature>
<feature type="repeat" description="6" evidence="11">
    <location>
        <begin position="140"/>
        <end position="148"/>
    </location>
</feature>
<feature type="repeat" description="7" evidence="11">
    <location>
        <begin position="149"/>
        <end position="157"/>
    </location>
</feature>
<feature type="repeat" description="8" evidence="11">
    <location>
        <begin position="158"/>
        <end position="166"/>
    </location>
</feature>
<feature type="repeat" description="9" evidence="11">
    <location>
        <begin position="167"/>
        <end position="175"/>
    </location>
</feature>
<feature type="repeat" description="10" evidence="11">
    <location>
        <begin position="176"/>
        <end position="184"/>
    </location>
</feature>
<feature type="repeat" description="11" evidence="11">
    <location>
        <begin position="185"/>
        <end position="193"/>
    </location>
</feature>
<feature type="repeat" description="12" evidence="11">
    <location>
        <begin position="194"/>
        <end position="202"/>
    </location>
</feature>
<feature type="repeat" description="13" evidence="11">
    <location>
        <begin position="203"/>
        <end position="211"/>
    </location>
</feature>
<feature type="repeat" description="14" evidence="11">
    <location>
        <begin position="212"/>
        <end position="220"/>
    </location>
</feature>
<feature type="repeat" description="15" evidence="11">
    <location>
        <begin position="221"/>
        <end position="229"/>
    </location>
</feature>
<feature type="repeat" description="16" evidence="11">
    <location>
        <begin position="230"/>
        <end position="238"/>
    </location>
</feature>
<feature type="repeat" description="17" evidence="11">
    <location>
        <begin position="239"/>
        <end position="247"/>
    </location>
</feature>
<feature type="repeat" description="18" evidence="11">
    <location>
        <begin position="248"/>
        <end position="256"/>
    </location>
</feature>
<feature type="repeat" description="19" evidence="11">
    <location>
        <begin position="257"/>
        <end position="265"/>
    </location>
</feature>
<feature type="domain" description="TSP type-1" evidence="6">
    <location>
        <begin position="304"/>
        <end position="356"/>
    </location>
</feature>
<feature type="region of interest" description="Disordered" evidence="7">
    <location>
        <begin position="51"/>
        <end position="295"/>
    </location>
</feature>
<feature type="region of interest" description="Required for the binding to heparan sulfate proteoglycans (HSPGs) on the surface of host hepatocytes" evidence="4">
    <location>
        <begin position="80"/>
        <end position="88"/>
    </location>
</feature>
<feature type="region of interest" description="Region I; contains the proteolytic cleavage site" evidence="3">
    <location>
        <begin position="91"/>
        <end position="95"/>
    </location>
</feature>
<feature type="region of interest" description="19 X 9 AA tandem repeats of [PA]-G-D-R-A-[DA]-G-Q-P" evidence="11">
    <location>
        <begin position="95"/>
        <end position="265"/>
    </location>
</feature>
<feature type="compositionally biased region" description="Basic and acidic residues" evidence="7">
    <location>
        <begin position="72"/>
        <end position="100"/>
    </location>
</feature>
<feature type="compositionally biased region" description="Gly residues" evidence="7">
    <location>
        <begin position="266"/>
        <end position="284"/>
    </location>
</feature>
<feature type="compositionally biased region" description="Low complexity" evidence="7">
    <location>
        <begin position="285"/>
        <end position="295"/>
    </location>
</feature>
<feature type="lipid moiety-binding region" description="GPI-anchor amidated cysteine" evidence="5">
    <location>
        <position position="355"/>
    </location>
</feature>
<feature type="glycosylation site" description="O-linked (Fuc) threonine" evidence="2">
    <location>
        <position position="319"/>
    </location>
</feature>
<feature type="disulfide bond" evidence="4">
    <location>
        <begin position="316"/>
        <end position="350"/>
    </location>
</feature>
<feature type="disulfide bond" evidence="4">
    <location>
        <begin position="320"/>
        <end position="355"/>
    </location>
</feature>
<feature type="sequence conflict" description="In Ref. 1; AAA29526." evidence="10" ref="1">
    <original>G</original>
    <variation>E</variation>
    <location>
        <position position="36"/>
    </location>
</feature>
<feature type="sequence conflict" description="In Ref. 1; AAA29526." evidence="10" ref="1">
    <original>G</original>
    <variation>R</variation>
    <location>
        <position position="96"/>
    </location>
</feature>
<feature type="sequence conflict" description="In Ref. 1; AAA29526." evidence="10" ref="1">
    <original>E</original>
    <variation>A</variation>
    <location>
        <position position="295"/>
    </location>
</feature>
<feature type="sequence conflict" description="In Ref. 1; AAA29526." evidence="10" ref="1">
    <original>R</original>
    <variation>S</variation>
    <location>
        <position position="328"/>
    </location>
</feature>
<feature type="helix" evidence="12">
    <location>
        <begin position="265"/>
        <end position="267"/>
    </location>
</feature>
<dbReference type="EMBL" id="M11926">
    <property type="protein sequence ID" value="AAA29526.1"/>
    <property type="molecule type" value="Genomic_DNA"/>
</dbReference>
<dbReference type="EMBL" id="J02751">
    <property type="protein sequence ID" value="AAA29529.1"/>
    <property type="status" value="ALT_SEQ"/>
    <property type="molecule type" value="Genomic_DNA"/>
</dbReference>
<dbReference type="PIR" id="A26256">
    <property type="entry name" value="OZZQAV"/>
</dbReference>
<dbReference type="PDB" id="7RLV">
    <property type="method" value="X-ray"/>
    <property type="resolution" value="2.20 A"/>
    <property type="chains" value="P/Q/R=150-167"/>
</dbReference>
<dbReference type="PDB" id="7RLW">
    <property type="method" value="X-ray"/>
    <property type="resolution" value="2.54 A"/>
    <property type="chains" value="P/R=249-266"/>
</dbReference>
<dbReference type="PDB" id="7RLX">
    <property type="method" value="X-ray"/>
    <property type="resolution" value="1.97 A"/>
    <property type="chains" value="P=222-239"/>
</dbReference>
<dbReference type="PDB" id="7RLY">
    <property type="method" value="X-ray"/>
    <property type="resolution" value="2.67 A"/>
    <property type="chains" value="P/Q/R=214-230"/>
</dbReference>
<dbReference type="PDB" id="7RLZ">
    <property type="method" value="X-ray"/>
    <property type="resolution" value="2.27 A"/>
    <property type="chains" value="P/R=258-275"/>
</dbReference>
<dbReference type="PDBsum" id="7RLV"/>
<dbReference type="PDBsum" id="7RLW"/>
<dbReference type="PDBsum" id="7RLX"/>
<dbReference type="PDBsum" id="7RLY"/>
<dbReference type="PDBsum" id="7RLZ"/>
<dbReference type="SMR" id="P08677"/>
<dbReference type="GlyCosmos" id="P08677">
    <property type="glycosylation" value="1 site, No reported glycans"/>
</dbReference>
<dbReference type="GO" id="GO:0009986">
    <property type="term" value="C:cell surface"/>
    <property type="evidence" value="ECO:0007669"/>
    <property type="project" value="InterPro"/>
</dbReference>
<dbReference type="GO" id="GO:0005737">
    <property type="term" value="C:cytoplasm"/>
    <property type="evidence" value="ECO:0007669"/>
    <property type="project" value="UniProtKB-SubCell"/>
</dbReference>
<dbReference type="GO" id="GO:0005886">
    <property type="term" value="C:plasma membrane"/>
    <property type="evidence" value="ECO:0007669"/>
    <property type="project" value="UniProtKB-SubCell"/>
</dbReference>
<dbReference type="GO" id="GO:0098552">
    <property type="term" value="C:side of membrane"/>
    <property type="evidence" value="ECO:0007669"/>
    <property type="project" value="UniProtKB-KW"/>
</dbReference>
<dbReference type="Gene3D" id="2.20.100.10">
    <property type="entry name" value="Thrombospondin type-1 (TSP1) repeat"/>
    <property type="match status" value="1"/>
</dbReference>
<dbReference type="InterPro" id="IPR003067">
    <property type="entry name" value="Crcmsprzoite"/>
</dbReference>
<dbReference type="InterPro" id="IPR000884">
    <property type="entry name" value="TSP1_rpt"/>
</dbReference>
<dbReference type="InterPro" id="IPR036383">
    <property type="entry name" value="TSP1_rpt_sf"/>
</dbReference>
<dbReference type="Pfam" id="PF00090">
    <property type="entry name" value="TSP_1"/>
    <property type="match status" value="1"/>
</dbReference>
<dbReference type="PRINTS" id="PR01303">
    <property type="entry name" value="CRCMSPRZOITE"/>
</dbReference>
<dbReference type="SMART" id="SM00209">
    <property type="entry name" value="TSP1"/>
    <property type="match status" value="1"/>
</dbReference>
<dbReference type="SUPFAM" id="SSF82895">
    <property type="entry name" value="TSP-1 type 1 repeat"/>
    <property type="match status" value="1"/>
</dbReference>
<dbReference type="PROSITE" id="PS50092">
    <property type="entry name" value="TSP1"/>
    <property type="match status" value="1"/>
</dbReference>
<comment type="function">
    <text evidence="1 3">Essential sporozoite protein (By similarity). In the mosquito vector, required for sporozoite development in the oocyst, migration through the vector hemolymph and entry into the vector salivary glands (By similarity). In the vertebrate host, required for sporozoite migration through the host dermis and infection of host hepatocytes (By similarity). Binds to highly sulfated heparan sulfate proteoglycans (HSPGs) on the surface of host hepatocytes (By similarity).</text>
</comment>
<comment type="function">
    <molecule>Circumsporozoite protein C-terminus</molecule>
    <text evidence="3">In the vertebrate host, binds to highly sulfated heparan sulfate proteoglycans (HSPGs) on the surface of host hepatocytes and is required for sporozoite invasion of the host hepatocytes.</text>
</comment>
<comment type="subcellular location">
    <subcellularLocation>
        <location evidence="2">Cell membrane</location>
        <topology evidence="5">Lipid-anchor</topology>
        <topology evidence="5">GPI-anchor</topology>
    </subcellularLocation>
    <subcellularLocation>
        <location evidence="3">Cytoplasm</location>
    </subcellularLocation>
    <text evidence="3">Localizes to the cytoplasm and the cell membrane in oocysts at day 6 post infection and then gradually distributes over the entire cell surface of the sporoblast and the budding sporozoites.</text>
</comment>
<comment type="domain">
    <text evidence="3 4">The N-terminus is involved in the initial binding to heparan sulfate proteoglycans (HSPGs) on the surface of host hepatocytes (By similarity). The N-terminus masks the TSP type-1 (TSR) domain which maintains the sporozoites in a migratory state, enabling them to complete their journey to the salivary gland in the mosquito vector and then to the host liver. The unmasking of the TSP type-1 (TSR) domain when the sporozoite interacts with the host hepatocyte also protects sporozoites from host antibodies (By similarity).</text>
</comment>
<comment type="domain">
    <text evidence="3">The TSP type-1 (TSR) domain is required for sporozoite development and invasion. CSP has two conformational states, an adhesive conformation in which the TSP type-1 (TSR) domain is exposed and a nonadhesive conformation in which the TSR is masked by the N-terminus. TSR-exposed conformation occurs during sporozoite development in the oocyst in the mosquito vector and during host hepatocyte invasion. TSR-masked conformation occurs during sporozoite migration through the hemolymph to salivary glands in the mosquito vector and in the host dermis.</text>
</comment>
<comment type="domain">
    <text evidence="3">The GPI-anchor is essential for cell membrane localization and for sporozoite formation inside the oocyst.</text>
</comment>
<comment type="PTM">
    <text evidence="1 3">During host cell invasion, proteolytically cleaved at the cell membrane in the region I by a papain-like cysteine protease of parasite origin (By similarity). Cleavage is triggered by the sporozoite contact with highly sulfated heparan sulfate proteoglycans (HSPGs) present on the host hepatocyte cell surface (By similarity). Cleavage exposes the TSP type-1 (TSR) domain and is required for productive invasion of host hepatocytes but not for adhesion to the host cell membrane (By similarity). Cleavage is dispensable for sporozoite development in the oocyst, motility and for traversal of host and vector cells (By similarity).</text>
</comment>
<comment type="PTM">
    <text evidence="2">O-glycosylated; maybe by POFUT2.</text>
</comment>
<comment type="polymorphism">
    <text evidence="8">The sequence of the repeats varies across Plasmodium species and strains.</text>
</comment>
<comment type="similarity">
    <text evidence="10">Belongs to the plasmodium circumsporozoite protein family.</text>
</comment>
<gene>
    <name evidence="3" type="primary">CSP</name>
</gene>
<protein>
    <recommendedName>
        <fullName evidence="9">Circumsporozoite protein</fullName>
        <shortName evidence="9">CS</shortName>
    </recommendedName>
    <component>
        <recommendedName>
            <fullName evidence="10">Circumsporozoite protein C-terminus</fullName>
        </recommendedName>
    </component>
</protein>
<sequence>MKNFILLAVSSILLVDLFPTHCGHNVDLSKAINLNGVNFNNVDASSLGAAHVGQSASRGRGLGENPDDEEGDAKKKKDGKKAEPKNPRENKLKQPGDRADGQPAGDRADGQPAGDRADGQPAGDRAAGQPAGDRADGQPAGDRADGQPAGDRADGQPAGDRADGQPAGDRAAGQPAGDRAAGQPAGDRADGQPAGDRAAGQPAGDRADGQPAGDRAAGQPAGDRADGQPAGDRAAGQPAGDRAAGQPAGDRAAGQPAGDRAAGQPAGNGAGGQAAGGNAGGGQGQNNEGANAPNEKSVKEYLDKVRATVGTEWTPCSVTCGVGVRVRRRVNAANKKPEDLTLNDLETDVCTMDKCAGIFNVVSNSLGLVILLVLALFN</sequence>